<accession>O03503</accession>
<evidence type="ECO:0000250" key="1"/>
<evidence type="ECO:0000250" key="2">
    <source>
        <dbReference type="UniProtKB" id="P00157"/>
    </source>
</evidence>
<evidence type="ECO:0000255" key="3">
    <source>
        <dbReference type="PROSITE-ProRule" id="PRU00967"/>
    </source>
</evidence>
<evidence type="ECO:0000255" key="4">
    <source>
        <dbReference type="PROSITE-ProRule" id="PRU00968"/>
    </source>
</evidence>
<dbReference type="EMBL" id="U87138">
    <property type="protein sequence ID" value="AAB91326.1"/>
    <property type="molecule type" value="Genomic_DNA"/>
</dbReference>
<dbReference type="SMR" id="O03503"/>
<dbReference type="GO" id="GO:0005743">
    <property type="term" value="C:mitochondrial inner membrane"/>
    <property type="evidence" value="ECO:0007669"/>
    <property type="project" value="UniProtKB-SubCell"/>
</dbReference>
<dbReference type="GO" id="GO:0045275">
    <property type="term" value="C:respiratory chain complex III"/>
    <property type="evidence" value="ECO:0007669"/>
    <property type="project" value="InterPro"/>
</dbReference>
<dbReference type="GO" id="GO:0046872">
    <property type="term" value="F:metal ion binding"/>
    <property type="evidence" value="ECO:0007669"/>
    <property type="project" value="UniProtKB-KW"/>
</dbReference>
<dbReference type="GO" id="GO:0008121">
    <property type="term" value="F:ubiquinol-cytochrome-c reductase activity"/>
    <property type="evidence" value="ECO:0007669"/>
    <property type="project" value="InterPro"/>
</dbReference>
<dbReference type="GO" id="GO:0006122">
    <property type="term" value="P:mitochondrial electron transport, ubiquinol to cytochrome c"/>
    <property type="evidence" value="ECO:0007669"/>
    <property type="project" value="TreeGrafter"/>
</dbReference>
<dbReference type="CDD" id="cd00290">
    <property type="entry name" value="cytochrome_b_C"/>
    <property type="match status" value="1"/>
</dbReference>
<dbReference type="CDD" id="cd00284">
    <property type="entry name" value="Cytochrome_b_N"/>
    <property type="match status" value="1"/>
</dbReference>
<dbReference type="FunFam" id="1.20.810.10:FF:000002">
    <property type="entry name" value="Cytochrome b"/>
    <property type="match status" value="1"/>
</dbReference>
<dbReference type="Gene3D" id="1.20.810.10">
    <property type="entry name" value="Cytochrome Bc1 Complex, Chain C"/>
    <property type="match status" value="1"/>
</dbReference>
<dbReference type="InterPro" id="IPR005798">
    <property type="entry name" value="Cyt_b/b6_C"/>
</dbReference>
<dbReference type="InterPro" id="IPR036150">
    <property type="entry name" value="Cyt_b/b6_C_sf"/>
</dbReference>
<dbReference type="InterPro" id="IPR005797">
    <property type="entry name" value="Cyt_b/b6_N"/>
</dbReference>
<dbReference type="InterPro" id="IPR027387">
    <property type="entry name" value="Cytb/b6-like_sf"/>
</dbReference>
<dbReference type="InterPro" id="IPR030689">
    <property type="entry name" value="Cytochrome_b"/>
</dbReference>
<dbReference type="InterPro" id="IPR048260">
    <property type="entry name" value="Cytochrome_b_C_euk/bac"/>
</dbReference>
<dbReference type="InterPro" id="IPR048259">
    <property type="entry name" value="Cytochrome_b_N_euk/bac"/>
</dbReference>
<dbReference type="InterPro" id="IPR016174">
    <property type="entry name" value="Di-haem_cyt_TM"/>
</dbReference>
<dbReference type="PANTHER" id="PTHR19271">
    <property type="entry name" value="CYTOCHROME B"/>
    <property type="match status" value="1"/>
</dbReference>
<dbReference type="PANTHER" id="PTHR19271:SF16">
    <property type="entry name" value="CYTOCHROME B"/>
    <property type="match status" value="1"/>
</dbReference>
<dbReference type="Pfam" id="PF00032">
    <property type="entry name" value="Cytochrom_B_C"/>
    <property type="match status" value="1"/>
</dbReference>
<dbReference type="Pfam" id="PF00033">
    <property type="entry name" value="Cytochrome_B"/>
    <property type="match status" value="1"/>
</dbReference>
<dbReference type="PIRSF" id="PIRSF038885">
    <property type="entry name" value="COB"/>
    <property type="match status" value="1"/>
</dbReference>
<dbReference type="SUPFAM" id="SSF81648">
    <property type="entry name" value="a domain/subunit of cytochrome bc1 complex (Ubiquinol-cytochrome c reductase)"/>
    <property type="match status" value="1"/>
</dbReference>
<dbReference type="SUPFAM" id="SSF81342">
    <property type="entry name" value="Transmembrane di-heme cytochromes"/>
    <property type="match status" value="1"/>
</dbReference>
<dbReference type="PROSITE" id="PS51003">
    <property type="entry name" value="CYTB_CTER"/>
    <property type="match status" value="1"/>
</dbReference>
<dbReference type="PROSITE" id="PS51002">
    <property type="entry name" value="CYTB_NTER"/>
    <property type="match status" value="1"/>
</dbReference>
<comment type="function">
    <text evidence="2">Component of the ubiquinol-cytochrome c reductase complex (complex III or cytochrome b-c1 complex) that is part of the mitochondrial respiratory chain. The b-c1 complex mediates electron transfer from ubiquinol to cytochrome c. Contributes to the generation of a proton gradient across the mitochondrial membrane that is then used for ATP synthesis.</text>
</comment>
<comment type="cofactor">
    <cofactor evidence="2">
        <name>heme b</name>
        <dbReference type="ChEBI" id="CHEBI:60344"/>
    </cofactor>
    <text evidence="2">Binds 2 heme b groups non-covalently.</text>
</comment>
<comment type="subunit">
    <text evidence="2">The cytochrome bc1 complex contains 11 subunits: 3 respiratory subunits (MT-CYB, CYC1 and UQCRFS1), 2 core proteins (UQCRC1 and UQCRC2) and 6 low-molecular weight proteins (UQCRH/QCR6, UQCRB/QCR7, UQCRQ/QCR8, UQCR10/QCR9, UQCR11/QCR10 and a cleavage product of UQCRFS1). This cytochrome bc1 complex then forms a dimer.</text>
</comment>
<comment type="subcellular location">
    <subcellularLocation>
        <location evidence="2">Mitochondrion inner membrane</location>
        <topology evidence="2">Multi-pass membrane protein</topology>
    </subcellularLocation>
</comment>
<comment type="miscellaneous">
    <text evidence="1">Heme 1 (or BL or b562) is low-potential and absorbs at about 562 nm, and heme 2 (or BH or b566) is high-potential and absorbs at about 566 nm.</text>
</comment>
<comment type="similarity">
    <text evidence="3 4">Belongs to the cytochrome b family.</text>
</comment>
<comment type="caution">
    <text evidence="2">The full-length protein contains only eight transmembrane helices, not nine as predicted by bioinformatics tools.</text>
</comment>
<organism>
    <name type="scientific">Trichosurus vulpecula</name>
    <name type="common">Brush-tailed possum</name>
    <dbReference type="NCBI Taxonomy" id="9337"/>
    <lineage>
        <taxon>Eukaryota</taxon>
        <taxon>Metazoa</taxon>
        <taxon>Chordata</taxon>
        <taxon>Craniata</taxon>
        <taxon>Vertebrata</taxon>
        <taxon>Euteleostomi</taxon>
        <taxon>Mammalia</taxon>
        <taxon>Metatheria</taxon>
        <taxon>Diprotodontia</taxon>
        <taxon>Phalangeridae</taxon>
        <taxon>Trichosurus</taxon>
    </lineage>
</organism>
<name>CYB_TRIVU</name>
<keyword id="KW-0249">Electron transport</keyword>
<keyword id="KW-0349">Heme</keyword>
<keyword id="KW-0408">Iron</keyword>
<keyword id="KW-0472">Membrane</keyword>
<keyword id="KW-0479">Metal-binding</keyword>
<keyword id="KW-0496">Mitochondrion</keyword>
<keyword id="KW-0999">Mitochondrion inner membrane</keyword>
<keyword id="KW-0679">Respiratory chain</keyword>
<keyword id="KW-0812">Transmembrane</keyword>
<keyword id="KW-1133">Transmembrane helix</keyword>
<keyword id="KW-0813">Transport</keyword>
<keyword id="KW-0830">Ubiquinone</keyword>
<reference key="1">
    <citation type="journal article" date="1997" name="Proc. R. Soc. B">
        <title>DNA phylogeny of the marsupial wolf resolved.</title>
        <authorList>
            <person name="Krajewski C."/>
            <person name="Buckley L."/>
            <person name="Westerman M."/>
        </authorList>
    </citation>
    <scope>NUCLEOTIDE SEQUENCE [GENOMIC DNA]</scope>
</reference>
<geneLocation type="mitochondrion"/>
<sequence length="381" mass="42988">MTNLRKTHPIMKIINHSFIDLPAPSNISAWWNFGSLLGICLTMQILTGLFLAMHYTADTATAFSSVAHICRDVNYGWLIRNLHANGASMFFMCLFLHIGRGIYYGSYLYKETWNIGVILLLTVMATAFVGYVLPWGQMSFWGATVITNLLSAIPYIGTTLVEWIWGGFSVDKATLTRFFAFHFILPFIITALVLVHLLFLHETGSNNPSGINPDSDKIPFHPYYTIKDALGLMLMLLTLLLLTLFSPDMLSDPDNFSPAKPTQHPPHIKPEWYFLFAYAILRSIPNKLGGVLALLASILILLAMPLLHTSNQRSMMFRPISQTLFWILTANLLILTWIGGQPVEQPYTIIGQVASISYFLLIIVLMPMAGFFENFMLKPKW</sequence>
<feature type="chain" id="PRO_0000061687" description="Cytochrome b">
    <location>
        <begin position="1"/>
        <end position="381"/>
    </location>
</feature>
<feature type="transmembrane region" description="Helical" evidence="2">
    <location>
        <begin position="33"/>
        <end position="53"/>
    </location>
</feature>
<feature type="transmembrane region" description="Helical" evidence="2">
    <location>
        <begin position="77"/>
        <end position="98"/>
    </location>
</feature>
<feature type="transmembrane region" description="Helical" evidence="2">
    <location>
        <begin position="113"/>
        <end position="133"/>
    </location>
</feature>
<feature type="transmembrane region" description="Helical" evidence="2">
    <location>
        <begin position="178"/>
        <end position="198"/>
    </location>
</feature>
<feature type="transmembrane region" description="Helical" evidence="2">
    <location>
        <begin position="226"/>
        <end position="246"/>
    </location>
</feature>
<feature type="transmembrane region" description="Helical" evidence="2">
    <location>
        <begin position="288"/>
        <end position="308"/>
    </location>
</feature>
<feature type="transmembrane region" description="Helical" evidence="2">
    <location>
        <begin position="320"/>
        <end position="340"/>
    </location>
</feature>
<feature type="transmembrane region" description="Helical" evidence="2">
    <location>
        <begin position="347"/>
        <end position="367"/>
    </location>
</feature>
<feature type="binding site" description="axial binding residue" evidence="2">
    <location>
        <position position="83"/>
    </location>
    <ligand>
        <name>heme b</name>
        <dbReference type="ChEBI" id="CHEBI:60344"/>
        <label>b562</label>
    </ligand>
    <ligandPart>
        <name>Fe</name>
        <dbReference type="ChEBI" id="CHEBI:18248"/>
    </ligandPart>
</feature>
<feature type="binding site" description="axial binding residue" evidence="2">
    <location>
        <position position="97"/>
    </location>
    <ligand>
        <name>heme b</name>
        <dbReference type="ChEBI" id="CHEBI:60344"/>
        <label>b566</label>
    </ligand>
    <ligandPart>
        <name>Fe</name>
        <dbReference type="ChEBI" id="CHEBI:18248"/>
    </ligandPart>
</feature>
<feature type="binding site" description="axial binding residue" evidence="2">
    <location>
        <position position="182"/>
    </location>
    <ligand>
        <name>heme b</name>
        <dbReference type="ChEBI" id="CHEBI:60344"/>
        <label>b562</label>
    </ligand>
    <ligandPart>
        <name>Fe</name>
        <dbReference type="ChEBI" id="CHEBI:18248"/>
    </ligandPart>
</feature>
<feature type="binding site" description="axial binding residue" evidence="2">
    <location>
        <position position="196"/>
    </location>
    <ligand>
        <name>heme b</name>
        <dbReference type="ChEBI" id="CHEBI:60344"/>
        <label>b566</label>
    </ligand>
    <ligandPart>
        <name>Fe</name>
        <dbReference type="ChEBI" id="CHEBI:18248"/>
    </ligandPart>
</feature>
<feature type="binding site" evidence="2">
    <location>
        <position position="201"/>
    </location>
    <ligand>
        <name>a ubiquinone</name>
        <dbReference type="ChEBI" id="CHEBI:16389"/>
    </ligand>
</feature>
<proteinExistence type="inferred from homology"/>
<gene>
    <name type="primary">MT-CYB</name>
    <name type="synonym">COB</name>
    <name type="synonym">CYTB</name>
    <name type="synonym">MTCYB</name>
</gene>
<protein>
    <recommendedName>
        <fullName>Cytochrome b</fullName>
    </recommendedName>
    <alternativeName>
        <fullName>Complex III subunit 3</fullName>
    </alternativeName>
    <alternativeName>
        <fullName>Complex III subunit III</fullName>
    </alternativeName>
    <alternativeName>
        <fullName>Cytochrome b-c1 complex subunit 3</fullName>
    </alternativeName>
    <alternativeName>
        <fullName>Ubiquinol-cytochrome-c reductase complex cytochrome b subunit</fullName>
    </alternativeName>
</protein>